<evidence type="ECO:0000269" key="1">
    <source>
    </source>
</evidence>
<evidence type="ECO:0000269" key="2">
    <source>
    </source>
</evidence>
<evidence type="ECO:0000305" key="3"/>
<evidence type="ECO:0007829" key="4">
    <source>
        <dbReference type="PDB" id="7PMK"/>
    </source>
</evidence>
<keyword id="KW-0002">3D-structure</keyword>
<keyword id="KW-0235">DNA replication</keyword>
<keyword id="KW-0539">Nucleus</keyword>
<keyword id="KW-1185">Reference proteome</keyword>
<proteinExistence type="evidence at protein level"/>
<dbReference type="EMBL" id="X88851">
    <property type="protein sequence ID" value="CAA61311.1"/>
    <property type="molecule type" value="Genomic_DNA"/>
</dbReference>
<dbReference type="EMBL" id="Z34288">
    <property type="protein sequence ID" value="CAA84050.1"/>
    <property type="molecule type" value="Genomic_DNA"/>
</dbReference>
<dbReference type="EMBL" id="Z49347">
    <property type="protein sequence ID" value="CAA89364.1"/>
    <property type="molecule type" value="Genomic_DNA"/>
</dbReference>
<dbReference type="EMBL" id="AY558248">
    <property type="protein sequence ID" value="AAS56574.1"/>
    <property type="molecule type" value="Genomic_DNA"/>
</dbReference>
<dbReference type="EMBL" id="BK006943">
    <property type="protein sequence ID" value="DAA08727.1"/>
    <property type="molecule type" value="Genomic_DNA"/>
</dbReference>
<dbReference type="PIR" id="S50799">
    <property type="entry name" value="S50799"/>
</dbReference>
<dbReference type="RefSeq" id="NP_012463.1">
    <property type="nucleotide sequence ID" value="NM_001181505.1"/>
</dbReference>
<dbReference type="PDB" id="3JC5">
    <property type="method" value="EM"/>
    <property type="resolution" value="4.70 A"/>
    <property type="chains" value="B=1-213"/>
</dbReference>
<dbReference type="PDB" id="3JC6">
    <property type="method" value="EM"/>
    <property type="resolution" value="3.70 A"/>
    <property type="chains" value="B=1-213"/>
</dbReference>
<dbReference type="PDB" id="3JC7">
    <property type="method" value="EM"/>
    <property type="resolution" value="4.80 A"/>
    <property type="chains" value="B=1-213"/>
</dbReference>
<dbReference type="PDB" id="5U8S">
    <property type="method" value="EM"/>
    <property type="resolution" value="6.10 A"/>
    <property type="chains" value="B=1-213"/>
</dbReference>
<dbReference type="PDB" id="5U8T">
    <property type="method" value="EM"/>
    <property type="resolution" value="4.90 A"/>
    <property type="chains" value="B=1-213"/>
</dbReference>
<dbReference type="PDB" id="6HV9">
    <property type="method" value="EM"/>
    <property type="resolution" value="4.98 A"/>
    <property type="chains" value="D=1-213"/>
</dbReference>
<dbReference type="PDB" id="6PTJ">
    <property type="method" value="EM"/>
    <property type="resolution" value="3.80 A"/>
    <property type="chains" value="B=1-213"/>
</dbReference>
<dbReference type="PDB" id="6PTN">
    <property type="method" value="EM"/>
    <property type="resolution" value="5.80 A"/>
    <property type="chains" value="B/b=1-213"/>
</dbReference>
<dbReference type="PDB" id="6PTO">
    <property type="method" value="EM"/>
    <property type="resolution" value="7.00 A"/>
    <property type="chains" value="B/b/o=1-213"/>
</dbReference>
<dbReference type="PDB" id="6SKL">
    <property type="method" value="EM"/>
    <property type="resolution" value="3.70 A"/>
    <property type="chains" value="B=1-213"/>
</dbReference>
<dbReference type="PDB" id="6U0M">
    <property type="method" value="EM"/>
    <property type="resolution" value="3.90 A"/>
    <property type="chains" value="B=3-200"/>
</dbReference>
<dbReference type="PDB" id="7PMK">
    <property type="method" value="EM"/>
    <property type="resolution" value="3.20 A"/>
    <property type="chains" value="B=1-213"/>
</dbReference>
<dbReference type="PDB" id="7PMN">
    <property type="method" value="EM"/>
    <property type="resolution" value="3.20 A"/>
    <property type="chains" value="B=1-213"/>
</dbReference>
<dbReference type="PDB" id="8B9A">
    <property type="method" value="EM"/>
    <property type="resolution" value="3.50 A"/>
    <property type="chains" value="D=1-213"/>
</dbReference>
<dbReference type="PDB" id="8B9B">
    <property type="method" value="EM"/>
    <property type="resolution" value="3.50 A"/>
    <property type="chains" value="D=1-213"/>
</dbReference>
<dbReference type="PDB" id="8B9C">
    <property type="method" value="EM"/>
    <property type="resolution" value="4.60 A"/>
    <property type="chains" value="D=1-213"/>
</dbReference>
<dbReference type="PDB" id="8KG6">
    <property type="method" value="EM"/>
    <property type="resolution" value="3.07 A"/>
    <property type="chains" value="B=1-213"/>
</dbReference>
<dbReference type="PDB" id="8KG8">
    <property type="method" value="EM"/>
    <property type="resolution" value="4.23 A"/>
    <property type="chains" value="B=1-213"/>
</dbReference>
<dbReference type="PDB" id="8KG9">
    <property type="method" value="EM"/>
    <property type="resolution" value="4.52 A"/>
    <property type="chains" value="B=1-213"/>
</dbReference>
<dbReference type="PDB" id="8P5E">
    <property type="method" value="EM"/>
    <property type="resolution" value="3.90 A"/>
    <property type="chains" value="I=1-213"/>
</dbReference>
<dbReference type="PDB" id="8P62">
    <property type="method" value="EM"/>
    <property type="resolution" value="3.90 A"/>
    <property type="chains" value="I=1-213"/>
</dbReference>
<dbReference type="PDB" id="8P63">
    <property type="method" value="EM"/>
    <property type="resolution" value="3.70 A"/>
    <property type="chains" value="I=1-213"/>
</dbReference>
<dbReference type="PDB" id="8W7M">
    <property type="method" value="EM"/>
    <property type="resolution" value="4.12 A"/>
    <property type="chains" value="B=1-213"/>
</dbReference>
<dbReference type="PDB" id="8W7S">
    <property type="method" value="EM"/>
    <property type="resolution" value="7.39 A"/>
    <property type="chains" value="B=1-213"/>
</dbReference>
<dbReference type="PDB" id="8XGC">
    <property type="method" value="EM"/>
    <property type="resolution" value="3.70 A"/>
    <property type="chains" value="B=1-213"/>
</dbReference>
<dbReference type="PDBsum" id="3JC5"/>
<dbReference type="PDBsum" id="3JC6"/>
<dbReference type="PDBsum" id="3JC7"/>
<dbReference type="PDBsum" id="5U8S"/>
<dbReference type="PDBsum" id="5U8T"/>
<dbReference type="PDBsum" id="6HV9"/>
<dbReference type="PDBsum" id="6PTJ"/>
<dbReference type="PDBsum" id="6PTN"/>
<dbReference type="PDBsum" id="6PTO"/>
<dbReference type="PDBsum" id="6SKL"/>
<dbReference type="PDBsum" id="6U0M"/>
<dbReference type="PDBsum" id="7PMK"/>
<dbReference type="PDBsum" id="7PMN"/>
<dbReference type="PDBsum" id="8B9A"/>
<dbReference type="PDBsum" id="8B9B"/>
<dbReference type="PDBsum" id="8B9C"/>
<dbReference type="PDBsum" id="8KG6"/>
<dbReference type="PDBsum" id="8KG8"/>
<dbReference type="PDBsum" id="8KG9"/>
<dbReference type="PDBsum" id="8P5E"/>
<dbReference type="PDBsum" id="8P62"/>
<dbReference type="PDBsum" id="8P63"/>
<dbReference type="PDBsum" id="8W7M"/>
<dbReference type="PDBsum" id="8W7S"/>
<dbReference type="PDBsum" id="8XGC"/>
<dbReference type="EMDB" id="EMD-0288"/>
<dbReference type="EMDB" id="EMD-10227"/>
<dbReference type="EMDB" id="EMD-13539"/>
<dbReference type="EMDB" id="EMD-15924"/>
<dbReference type="EMDB" id="EMD-17449"/>
<dbReference type="EMDB" id="EMD-17458"/>
<dbReference type="EMDB" id="EMD-17459"/>
<dbReference type="EMDB" id="EMD-20471"/>
<dbReference type="EMDB" id="EMD-20472"/>
<dbReference type="EMDB" id="EMD-20473"/>
<dbReference type="EMDB" id="EMD-20607"/>
<dbReference type="EMDB" id="EMD-37211"/>
<dbReference type="EMDB" id="EMD-37213"/>
<dbReference type="EMDB" id="EMD-37215"/>
<dbReference type="EMDB" id="EMD-37343"/>
<dbReference type="EMDB" id="EMD-37345"/>
<dbReference type="EMDB" id="EMD-8518"/>
<dbReference type="EMDB" id="EMD-8519"/>
<dbReference type="SMR" id="P40359"/>
<dbReference type="BioGRID" id="33683">
    <property type="interactions" value="199"/>
</dbReference>
<dbReference type="ComplexPortal" id="CPX-1641">
    <property type="entry name" value="GINS complex"/>
</dbReference>
<dbReference type="DIP" id="DIP-3858N"/>
<dbReference type="FunCoup" id="P40359">
    <property type="interactions" value="834"/>
</dbReference>
<dbReference type="IntAct" id="P40359">
    <property type="interactions" value="8"/>
</dbReference>
<dbReference type="MINT" id="P40359"/>
<dbReference type="STRING" id="4932.YJL072C"/>
<dbReference type="PaxDb" id="4932-YJL072C"/>
<dbReference type="PeptideAtlas" id="P40359"/>
<dbReference type="EnsemblFungi" id="YJL072C_mRNA">
    <property type="protein sequence ID" value="YJL072C"/>
    <property type="gene ID" value="YJL072C"/>
</dbReference>
<dbReference type="GeneID" id="853373"/>
<dbReference type="KEGG" id="sce:YJL072C"/>
<dbReference type="AGR" id="SGD:S000003608"/>
<dbReference type="SGD" id="S000003608">
    <property type="gene designation" value="PSF2"/>
</dbReference>
<dbReference type="VEuPathDB" id="FungiDB:YJL072C"/>
<dbReference type="eggNOG" id="KOG4071">
    <property type="taxonomic scope" value="Eukaryota"/>
</dbReference>
<dbReference type="GeneTree" id="ENSGT00390000007838"/>
<dbReference type="HOGENOM" id="CLU_078274_1_1_1"/>
<dbReference type="InParanoid" id="P40359"/>
<dbReference type="OMA" id="DSLNCMY"/>
<dbReference type="OrthoDB" id="1938138at2759"/>
<dbReference type="BioCyc" id="YEAST:G3O-31530-MONOMER"/>
<dbReference type="Reactome" id="R-SCE-176974">
    <property type="pathway name" value="Unwinding of DNA"/>
</dbReference>
<dbReference type="BioGRID-ORCS" id="853373">
    <property type="hits" value="3 hits in 10 CRISPR screens"/>
</dbReference>
<dbReference type="PRO" id="PR:P40359"/>
<dbReference type="Proteomes" id="UP000002311">
    <property type="component" value="Chromosome X"/>
</dbReference>
<dbReference type="RNAct" id="P40359">
    <property type="molecule type" value="protein"/>
</dbReference>
<dbReference type="GO" id="GO:0071162">
    <property type="term" value="C:CMG complex"/>
    <property type="evidence" value="ECO:0000314"/>
    <property type="project" value="SGD"/>
</dbReference>
<dbReference type="GO" id="GO:0031261">
    <property type="term" value="C:DNA replication preinitiation complex"/>
    <property type="evidence" value="ECO:0000353"/>
    <property type="project" value="SGD"/>
</dbReference>
<dbReference type="GO" id="GO:0000811">
    <property type="term" value="C:GINS complex"/>
    <property type="evidence" value="ECO:0000353"/>
    <property type="project" value="ComplexPortal"/>
</dbReference>
<dbReference type="GO" id="GO:0043596">
    <property type="term" value="C:nuclear replication fork"/>
    <property type="evidence" value="ECO:0000314"/>
    <property type="project" value="SGD"/>
</dbReference>
<dbReference type="GO" id="GO:0005634">
    <property type="term" value="C:nucleus"/>
    <property type="evidence" value="ECO:0000314"/>
    <property type="project" value="SGD"/>
</dbReference>
<dbReference type="GO" id="GO:0006261">
    <property type="term" value="P:DNA-templated DNA replication"/>
    <property type="evidence" value="ECO:0000315"/>
    <property type="project" value="SGD"/>
</dbReference>
<dbReference type="GO" id="GO:0000727">
    <property type="term" value="P:double-strand break repair via break-induced replication"/>
    <property type="evidence" value="ECO:0000315"/>
    <property type="project" value="SGD"/>
</dbReference>
<dbReference type="CDD" id="cd11712">
    <property type="entry name" value="GINS_A_psf2"/>
    <property type="match status" value="1"/>
</dbReference>
<dbReference type="CDD" id="cd21694">
    <property type="entry name" value="GINS_B_Psf2"/>
    <property type="match status" value="1"/>
</dbReference>
<dbReference type="FunFam" id="1.20.58.1020:FF:000001">
    <property type="entry name" value="DNA replication complex GINS protein PSF2"/>
    <property type="match status" value="1"/>
</dbReference>
<dbReference type="FunFam" id="3.40.5.50:FF:000003">
    <property type="entry name" value="DNA replication complex GINS protein PSF2"/>
    <property type="match status" value="1"/>
</dbReference>
<dbReference type="Gene3D" id="1.20.58.1020">
    <property type="match status" value="1"/>
</dbReference>
<dbReference type="Gene3D" id="3.40.5.50">
    <property type="match status" value="1"/>
</dbReference>
<dbReference type="InterPro" id="IPR021151">
    <property type="entry name" value="GINS_A"/>
</dbReference>
<dbReference type="InterPro" id="IPR036224">
    <property type="entry name" value="GINS_bundle-like_dom_sf"/>
</dbReference>
<dbReference type="InterPro" id="IPR007257">
    <property type="entry name" value="GINS_Psf2"/>
</dbReference>
<dbReference type="InterPro" id="IPR056784">
    <property type="entry name" value="PSF2_N"/>
</dbReference>
<dbReference type="PANTHER" id="PTHR12772">
    <property type="entry name" value="DNA REPLICATION COMPLEX GINS PROTEIN PSF2"/>
    <property type="match status" value="1"/>
</dbReference>
<dbReference type="PANTHER" id="PTHR12772:SF0">
    <property type="entry name" value="DNA REPLICATION COMPLEX GINS PROTEIN PSF2"/>
    <property type="match status" value="1"/>
</dbReference>
<dbReference type="Pfam" id="PF25005">
    <property type="entry name" value="PSF2_N"/>
    <property type="match status" value="1"/>
</dbReference>
<dbReference type="Pfam" id="PF05916">
    <property type="entry name" value="Sld5"/>
    <property type="match status" value="1"/>
</dbReference>
<dbReference type="PIRSF" id="PIRSF028998">
    <property type="entry name" value="GINS_Psf2_subgr"/>
    <property type="match status" value="1"/>
</dbReference>
<dbReference type="SUPFAM" id="SSF158573">
    <property type="entry name" value="GINS helical bundle-like"/>
    <property type="match status" value="1"/>
</dbReference>
<dbReference type="SUPFAM" id="SSF160059">
    <property type="entry name" value="PriA/YqbF domain"/>
    <property type="match status" value="1"/>
</dbReference>
<protein>
    <recommendedName>
        <fullName>DNA replication complex GINS protein PSF2</fullName>
    </recommendedName>
    <alternativeName>
        <fullName>Partner of Sld five 2</fullName>
    </alternativeName>
</protein>
<name>PSF2_YEAST</name>
<accession>P40359</accession>
<accession>D6VWB1</accession>
<feature type="chain" id="PRO_0000194822" description="DNA replication complex GINS protein PSF2">
    <location>
        <begin position="1"/>
        <end position="213"/>
    </location>
</feature>
<feature type="helix" evidence="4">
    <location>
        <begin position="5"/>
        <end position="7"/>
    </location>
</feature>
<feature type="strand" evidence="4">
    <location>
        <begin position="8"/>
        <end position="10"/>
    </location>
</feature>
<feature type="helix" evidence="4">
    <location>
        <begin position="13"/>
        <end position="21"/>
    </location>
</feature>
<feature type="strand" evidence="4">
    <location>
        <begin position="23"/>
        <end position="31"/>
    </location>
</feature>
<feature type="strand" evidence="4">
    <location>
        <begin position="53"/>
        <end position="55"/>
    </location>
</feature>
<feature type="helix" evidence="4">
    <location>
        <begin position="58"/>
        <end position="61"/>
    </location>
</feature>
<feature type="strand" evidence="4">
    <location>
        <begin position="69"/>
        <end position="72"/>
    </location>
</feature>
<feature type="helix" evidence="4">
    <location>
        <begin position="73"/>
        <end position="80"/>
    </location>
</feature>
<feature type="turn" evidence="4">
    <location>
        <begin position="81"/>
        <end position="83"/>
    </location>
</feature>
<feature type="strand" evidence="4">
    <location>
        <begin position="84"/>
        <end position="87"/>
    </location>
</feature>
<feature type="helix" evidence="4">
    <location>
        <begin position="95"/>
        <end position="107"/>
    </location>
</feature>
<feature type="strand" evidence="4">
    <location>
        <begin position="109"/>
        <end position="111"/>
    </location>
</feature>
<feature type="helix" evidence="4">
    <location>
        <begin position="119"/>
        <end position="129"/>
    </location>
</feature>
<feature type="helix" evidence="4">
    <location>
        <begin position="138"/>
        <end position="160"/>
    </location>
</feature>
<feature type="helix" evidence="4">
    <location>
        <begin position="175"/>
        <end position="199"/>
    </location>
</feature>
<gene>
    <name type="primary">PSF2</name>
    <name type="ordered locus">YJL072C</name>
    <name type="ORF">HRF213</name>
    <name type="ORF">J1086</name>
</gene>
<organism>
    <name type="scientific">Saccharomyces cerevisiae (strain ATCC 204508 / S288c)</name>
    <name type="common">Baker's yeast</name>
    <dbReference type="NCBI Taxonomy" id="559292"/>
    <lineage>
        <taxon>Eukaryota</taxon>
        <taxon>Fungi</taxon>
        <taxon>Dikarya</taxon>
        <taxon>Ascomycota</taxon>
        <taxon>Saccharomycotina</taxon>
        <taxon>Saccharomycetes</taxon>
        <taxon>Saccharomycetales</taxon>
        <taxon>Saccharomycetaceae</taxon>
        <taxon>Saccharomyces</taxon>
    </lineage>
</organism>
<sequence>MSLPAHLQQTFSPEEIQFIVENEPIKIFPRITTRQKIRGDDRGTGNHTRWQLITTDDKALNNMVAMRSTEVVLWIALLLKQQSKCSIVAPQWLTTKELDRKIQYEKTHPDRFSELPWNWLVLARILFNKAKDDFHDPIHELRGKIQDLREIRQIKVLKGLKYLNESHLQLDNLSLLEINELRPFITEIMDKLREIHTASLTAGTENDEEEFNI</sequence>
<comment type="function">
    <text evidence="1">Functions as part of the GINS complex which plays an essential role in the initiation of DNA replication by binding to DNA replication origins and facilitating the assembly of the DNA replication machinery.</text>
</comment>
<comment type="subunit">
    <text evidence="1 2">Component of the GINS complex which is a heterotetramer of SLD5, PSF1, PSF2 and PSF3. Interacts with PSF1 and SLD5.</text>
</comment>
<comment type="interaction">
    <interactant intactId="EBI-25936">
        <id>P40359</id>
    </interactant>
    <interactant intactId="EBI-22066">
        <id>Q12488</id>
        <label>PSF1</label>
    </interactant>
    <organismsDiffer>false</organismsDiffer>
    <experiments>5</experiments>
</comment>
<comment type="interaction">
    <interactant intactId="EBI-25936">
        <id>P40359</id>
    </interactant>
    <interactant intactId="EBI-30392">
        <id>Q12146</id>
        <label>PSF3</label>
    </interactant>
    <organismsDiffer>false</organismsDiffer>
    <experiments>5</experiments>
</comment>
<comment type="interaction">
    <interactant intactId="EBI-25936">
        <id>P40359</id>
    </interactant>
    <interactant intactId="EBI-37437">
        <id>Q03406</id>
        <label>SLD5</label>
    </interactant>
    <organismsDiffer>false</organismsDiffer>
    <experiments>7</experiments>
</comment>
<comment type="subcellular location">
    <subcellularLocation>
        <location evidence="1">Nucleus</location>
    </subcellularLocation>
</comment>
<comment type="similarity">
    <text evidence="3">Belongs to the GINS2/PSF2 family.</text>
</comment>
<reference key="1">
    <citation type="journal article" date="2003" name="Genes Dev.">
        <title>GINS, a novel multiprotein complex required for chromosomal DNA replication in budding yeast.</title>
        <authorList>
            <person name="Takayama Y."/>
            <person name="Kamimura Y."/>
            <person name="Okawa M."/>
            <person name="Muramatsu S."/>
            <person name="Sugino A."/>
            <person name="Araki H."/>
        </authorList>
    </citation>
    <scope>NUCLEOTIDE SEQUENCE [GENOMIC DNA]</scope>
    <scope>FUNCTION</scope>
    <scope>IDENTIFICATION IN THE GINS COMPLEX</scope>
    <scope>SUBCELLULAR LOCATION</scope>
</reference>
<reference key="2">
    <citation type="submission" date="1995-06" db="EMBL/GenBank/DDBJ databases">
        <authorList>
            <person name="Sor F.J."/>
        </authorList>
    </citation>
    <scope>NUCLEOTIDE SEQUENCE [GENOMIC DNA]</scope>
    <source>
        <strain>ATCC 204508 / S288c</strain>
    </source>
</reference>
<reference key="3">
    <citation type="journal article" date="1995" name="Yeast">
        <title>Sequence of a 17.1 kb DNA fragment from chromosome X of Saccharomyces cerevisiae includes the mitochondrial ribosomal protein L8.</title>
        <authorList>
            <person name="Vandenbol M."/>
            <person name="Durand P."/>
            <person name="Dion C."/>
            <person name="Portetelle D."/>
            <person name="Hilger F."/>
        </authorList>
    </citation>
    <scope>NUCLEOTIDE SEQUENCE [GENOMIC DNA]</scope>
    <source>
        <strain>ATCC 204508 / S288c</strain>
    </source>
</reference>
<reference key="4">
    <citation type="journal article" date="1996" name="EMBO J.">
        <title>Complete nucleotide sequence of Saccharomyces cerevisiae chromosome X.</title>
        <authorList>
            <person name="Galibert F."/>
            <person name="Alexandraki D."/>
            <person name="Baur A."/>
            <person name="Boles E."/>
            <person name="Chalwatzis N."/>
            <person name="Chuat J.-C."/>
            <person name="Coster F."/>
            <person name="Cziepluch C."/>
            <person name="de Haan M."/>
            <person name="Domdey H."/>
            <person name="Durand P."/>
            <person name="Entian K.-D."/>
            <person name="Gatius M."/>
            <person name="Goffeau A."/>
            <person name="Grivell L.A."/>
            <person name="Hennemann A."/>
            <person name="Herbert C.J."/>
            <person name="Heumann K."/>
            <person name="Hilger F."/>
            <person name="Hollenberg C.P."/>
            <person name="Huang M.-E."/>
            <person name="Jacq C."/>
            <person name="Jauniaux J.-C."/>
            <person name="Katsoulou C."/>
            <person name="Kirchrath L."/>
            <person name="Kleine K."/>
            <person name="Kordes E."/>
            <person name="Koetter P."/>
            <person name="Liebl S."/>
            <person name="Louis E.J."/>
            <person name="Manus V."/>
            <person name="Mewes H.-W."/>
            <person name="Miosga T."/>
            <person name="Obermaier B."/>
            <person name="Perea J."/>
            <person name="Pohl T.M."/>
            <person name="Portetelle D."/>
            <person name="Pujol A."/>
            <person name="Purnelle B."/>
            <person name="Ramezani Rad M."/>
            <person name="Rasmussen S.W."/>
            <person name="Rose M."/>
            <person name="Rossau R."/>
            <person name="Schaaff-Gerstenschlaeger I."/>
            <person name="Smits P.H.M."/>
            <person name="Scarcez T."/>
            <person name="Soriano N."/>
            <person name="To Van D."/>
            <person name="Tzermia M."/>
            <person name="Van Broekhoven A."/>
            <person name="Vandenbol M."/>
            <person name="Wedler H."/>
            <person name="von Wettstein D."/>
            <person name="Wambutt R."/>
            <person name="Zagulski M."/>
            <person name="Zollner A."/>
            <person name="Karpfinger-Hartl L."/>
        </authorList>
    </citation>
    <scope>NUCLEOTIDE SEQUENCE [LARGE SCALE GENOMIC DNA]</scope>
    <source>
        <strain>ATCC 204508 / S288c</strain>
    </source>
</reference>
<reference key="5">
    <citation type="journal article" date="2003" name="Mol. Cell">
        <title>Assigning function to yeast proteins by integration of technologies.</title>
        <authorList>
            <person name="Hazbun T.R."/>
            <person name="Malmstroem L."/>
            <person name="Anderson S."/>
            <person name="Graczyk B.J."/>
            <person name="Fox B."/>
            <person name="Riffle M."/>
            <person name="Sundin B.A."/>
            <person name="Aranda J.D."/>
            <person name="McDonald W.H."/>
            <person name="Chiu C.-H."/>
            <person name="Snydsman B.E."/>
            <person name="Bradley P."/>
            <person name="Muller E.G.D."/>
            <person name="Fields S."/>
            <person name="Baker D."/>
            <person name="Yates J.R. III"/>
            <person name="Davis T.N."/>
        </authorList>
    </citation>
    <scope>IDENTIFICATION BY MASS SPECTROMETRY</scope>
    <scope>INTERACTION WITH PSF1 AND SLD5</scope>
</reference>
<reference key="6">
    <citation type="journal article" date="2014" name="G3 (Bethesda)">
        <title>The reference genome sequence of Saccharomyces cerevisiae: Then and now.</title>
        <authorList>
            <person name="Engel S.R."/>
            <person name="Dietrich F.S."/>
            <person name="Fisk D.G."/>
            <person name="Binkley G."/>
            <person name="Balakrishnan R."/>
            <person name="Costanzo M.C."/>
            <person name="Dwight S.S."/>
            <person name="Hitz B.C."/>
            <person name="Karra K."/>
            <person name="Nash R.S."/>
            <person name="Weng S."/>
            <person name="Wong E.D."/>
            <person name="Lloyd P."/>
            <person name="Skrzypek M.S."/>
            <person name="Miyasato S.R."/>
            <person name="Simison M."/>
            <person name="Cherry J.M."/>
        </authorList>
    </citation>
    <scope>GENOME REANNOTATION</scope>
    <source>
        <strain>ATCC 204508 / S288c</strain>
    </source>
</reference>
<reference key="7">
    <citation type="journal article" date="2007" name="Genome Res.">
        <title>Approaching a complete repository of sequence-verified protein-encoding clones for Saccharomyces cerevisiae.</title>
        <authorList>
            <person name="Hu Y."/>
            <person name="Rolfs A."/>
            <person name="Bhullar B."/>
            <person name="Murthy T.V.S."/>
            <person name="Zhu C."/>
            <person name="Berger M.F."/>
            <person name="Camargo A.A."/>
            <person name="Kelley F."/>
            <person name="McCarron S."/>
            <person name="Jepson D."/>
            <person name="Richardson A."/>
            <person name="Raphael J."/>
            <person name="Moreira D."/>
            <person name="Taycher E."/>
            <person name="Zuo D."/>
            <person name="Mohr S."/>
            <person name="Kane M.F."/>
            <person name="Williamson J."/>
            <person name="Simpson A.J.G."/>
            <person name="Bulyk M.L."/>
            <person name="Harlow E."/>
            <person name="Marsischky G."/>
            <person name="Kolodner R.D."/>
            <person name="LaBaer J."/>
        </authorList>
    </citation>
    <scope>NUCLEOTIDE SEQUENCE [GENOMIC DNA]</scope>
    <source>
        <strain>ATCC 204508 / S288c</strain>
    </source>
</reference>